<evidence type="ECO:0000255" key="1">
    <source>
        <dbReference type="PROSITE-ProRule" id="PRU01188"/>
    </source>
</evidence>
<name>K2C2_XENLA</name>
<feature type="chain" id="PRO_0000063719" description="Keratin, type II cytoskeletal I">
    <location>
        <begin position="1" status="less than"/>
        <end position="419"/>
    </location>
</feature>
<feature type="domain" description="IF rod" evidence="1">
    <location>
        <begin position="1" status="less than"/>
        <end position="275"/>
    </location>
</feature>
<feature type="region of interest" description="Linker 1">
    <location>
        <begin position="1" status="less than"/>
        <end position="16"/>
    </location>
</feature>
<feature type="region of interest" description="Coil 1B">
    <location>
        <begin position="17"/>
        <end position="108"/>
    </location>
</feature>
<feature type="region of interest" description="Linker 12">
    <location>
        <begin position="109"/>
        <end position="132"/>
    </location>
</feature>
<feature type="region of interest" description="Coil 2">
    <location>
        <begin position="133"/>
        <end position="271"/>
    </location>
</feature>
<feature type="region of interest" description="Tail">
    <location>
        <begin position="272"/>
        <end position="419"/>
    </location>
</feature>
<feature type="site" description="Stutter">
    <location>
        <position position="215"/>
    </location>
</feature>
<feature type="non-terminal residue">
    <location>
        <position position="1"/>
    </location>
</feature>
<sequence length="419" mass="44595">KGSTKRANLDPLFEKYISDLKRYLDNLINEKGRLQQELRTLQDLVEDFKKKYEDEINKRTKAENDFVVLKKDVDAAYMIKTELEAKVDTLTSEINFFRTLFAAELSQVHDQVTDTSVVLTMDNNRDLNLDSIIKEVKCQYEQIAQRSKLEAEALYDQRYKQLQQTVEGHGDSIKNSKTEISDLNLKIQRLKAEIENVKKQIAFLNQSIAGAEERGNLALKDAERKLKDLEDAERKLKADMARQLKEYQELMSAKLALNLEISTYRYMLEGEEGRMSGQISNNVSISVISGGSSVYTALGGAAGGMGGGGGMGGGMGGGMGMGGGMGMGGGMGMGGGMGMGGGMGGGMGMGGGMGMGGGMGMGDGMGSGHGGGYGNEACFGGGMGYEGGSMHGGGSSYGHSGGKTSVAIASTTSTTKRSY</sequence>
<comment type="subunit">
    <text>Heterotetramer of two type I and two type II keratins.</text>
</comment>
<comment type="miscellaneous">
    <text>There are two types of cytoskeletal and microfibrillar keratin: I (acidic; 40-55 kDa) and II (neutral to basic; 56-70 kDa).</text>
</comment>
<comment type="similarity">
    <text evidence="1">Belongs to the intermediate filament family.</text>
</comment>
<proteinExistence type="evidence at transcript level"/>
<reference key="1">
    <citation type="journal article" date="1985" name="J. Mol. Biol.">
        <title>Amino acid sequence microheterogeneities of basic (type II) cytokeratins of Xenopus laevis epidermis and evolutionary conservativity of helical and non-helical domains.</title>
        <authorList>
            <person name="Hoffmann W."/>
            <person name="Franz J.K."/>
            <person name="Franke W.W."/>
        </authorList>
    </citation>
    <scope>NUCLEOTIDE SEQUENCE [MRNA]</scope>
</reference>
<organism>
    <name type="scientific">Xenopus laevis</name>
    <name type="common">African clawed frog</name>
    <dbReference type="NCBI Taxonomy" id="8355"/>
    <lineage>
        <taxon>Eukaryota</taxon>
        <taxon>Metazoa</taxon>
        <taxon>Chordata</taxon>
        <taxon>Craniata</taxon>
        <taxon>Vertebrata</taxon>
        <taxon>Euteleostomi</taxon>
        <taxon>Amphibia</taxon>
        <taxon>Batrachia</taxon>
        <taxon>Anura</taxon>
        <taxon>Pipoidea</taxon>
        <taxon>Pipidae</taxon>
        <taxon>Xenopodinae</taxon>
        <taxon>Xenopus</taxon>
        <taxon>Xenopus</taxon>
    </lineage>
</organism>
<dbReference type="EMBL" id="X02895">
    <property type="protein sequence ID" value="CAA26654.1"/>
    <property type="molecule type" value="mRNA"/>
</dbReference>
<dbReference type="PIR" id="A02952">
    <property type="entry name" value="KRXL2B"/>
</dbReference>
<dbReference type="SMR" id="P04265"/>
<dbReference type="AGR" id="Xenbase:XB-GENE-6252176"/>
<dbReference type="Xenbase" id="XB-GENE-6252176">
    <property type="gene designation" value="krt78.6.L"/>
</dbReference>
<dbReference type="Proteomes" id="UP000186698">
    <property type="component" value="Unplaced"/>
</dbReference>
<dbReference type="GO" id="GO:0005615">
    <property type="term" value="C:extracellular space"/>
    <property type="evidence" value="ECO:0007669"/>
    <property type="project" value="TreeGrafter"/>
</dbReference>
<dbReference type="GO" id="GO:0045095">
    <property type="term" value="C:keratin filament"/>
    <property type="evidence" value="ECO:0000318"/>
    <property type="project" value="GO_Central"/>
</dbReference>
<dbReference type="GO" id="GO:0046982">
    <property type="term" value="F:protein heterodimerization activity"/>
    <property type="evidence" value="ECO:0000250"/>
    <property type="project" value="UniProtKB"/>
</dbReference>
<dbReference type="GO" id="GO:0030280">
    <property type="term" value="F:structural constituent of skin epidermis"/>
    <property type="evidence" value="ECO:0000318"/>
    <property type="project" value="GO_Central"/>
</dbReference>
<dbReference type="GO" id="GO:0045109">
    <property type="term" value="P:intermediate filament organization"/>
    <property type="evidence" value="ECO:0000318"/>
    <property type="project" value="GO_Central"/>
</dbReference>
<dbReference type="GO" id="GO:0031424">
    <property type="term" value="P:keratinization"/>
    <property type="evidence" value="ECO:0000318"/>
    <property type="project" value="GO_Central"/>
</dbReference>
<dbReference type="GO" id="GO:0051290">
    <property type="term" value="P:protein heterotetramerization"/>
    <property type="evidence" value="ECO:0000250"/>
    <property type="project" value="UniProtKB"/>
</dbReference>
<dbReference type="FunFam" id="1.20.5.1160:FF:000001">
    <property type="entry name" value="Keratin type II"/>
    <property type="match status" value="1"/>
</dbReference>
<dbReference type="FunFam" id="1.20.5.170:FF:000065">
    <property type="entry name" value="Keratin, type II cytoskeletal 80"/>
    <property type="match status" value="1"/>
</dbReference>
<dbReference type="FunFam" id="1.20.5.500:FF:000001">
    <property type="entry name" value="Type II keratin 23"/>
    <property type="match status" value="1"/>
</dbReference>
<dbReference type="Gene3D" id="1.20.5.170">
    <property type="match status" value="1"/>
</dbReference>
<dbReference type="Gene3D" id="1.20.5.500">
    <property type="entry name" value="Single helix bin"/>
    <property type="match status" value="1"/>
</dbReference>
<dbReference type="Gene3D" id="1.20.5.1160">
    <property type="entry name" value="Vasodilator-stimulated phosphoprotein"/>
    <property type="match status" value="1"/>
</dbReference>
<dbReference type="InterPro" id="IPR018039">
    <property type="entry name" value="IF_conserved"/>
</dbReference>
<dbReference type="InterPro" id="IPR039008">
    <property type="entry name" value="IF_rod_dom"/>
</dbReference>
<dbReference type="InterPro" id="IPR003054">
    <property type="entry name" value="Keratin_II"/>
</dbReference>
<dbReference type="PANTHER" id="PTHR45616">
    <property type="entry name" value="GATA-TYPE DOMAIN-CONTAINING PROTEIN"/>
    <property type="match status" value="1"/>
</dbReference>
<dbReference type="PANTHER" id="PTHR45616:SF66">
    <property type="entry name" value="KERATIN, TYPE II CYTOSKELETAL I"/>
    <property type="match status" value="1"/>
</dbReference>
<dbReference type="Pfam" id="PF00038">
    <property type="entry name" value="Filament"/>
    <property type="match status" value="1"/>
</dbReference>
<dbReference type="PRINTS" id="PR01276">
    <property type="entry name" value="TYPE2KERATIN"/>
</dbReference>
<dbReference type="SMART" id="SM01391">
    <property type="entry name" value="Filament"/>
    <property type="match status" value="1"/>
</dbReference>
<dbReference type="SUPFAM" id="SSF64593">
    <property type="entry name" value="Intermediate filament protein, coiled coil region"/>
    <property type="match status" value="2"/>
</dbReference>
<dbReference type="PROSITE" id="PS00226">
    <property type="entry name" value="IF_ROD_1"/>
    <property type="match status" value="1"/>
</dbReference>
<dbReference type="PROSITE" id="PS51842">
    <property type="entry name" value="IF_ROD_2"/>
    <property type="match status" value="1"/>
</dbReference>
<keyword id="KW-0175">Coiled coil</keyword>
<keyword id="KW-0403">Intermediate filament</keyword>
<keyword id="KW-0416">Keratin</keyword>
<keyword id="KW-1185">Reference proteome</keyword>
<protein>
    <recommendedName>
        <fullName>Keratin, type II cytoskeletal I</fullName>
    </recommendedName>
    <alternativeName>
        <fullName>Clone PUF164</fullName>
    </alternativeName>
</protein>
<accession>P04265</accession>